<dbReference type="EMBL" id="AF220238">
    <property type="protein sequence ID" value="AAF87206.1"/>
    <property type="molecule type" value="mRNA"/>
</dbReference>
<dbReference type="EMBL" id="BC055864">
    <property type="protein sequence ID" value="AAH55864.1"/>
    <property type="molecule type" value="mRNA"/>
</dbReference>
<dbReference type="CCDS" id="CCDS56900.1"/>
<dbReference type="RefSeq" id="NP_064675.1">
    <property type="nucleotide sequence ID" value="NM_020279.3"/>
</dbReference>
<dbReference type="SMR" id="Q9JIL2"/>
<dbReference type="FunCoup" id="Q9JIL2">
    <property type="interactions" value="591"/>
</dbReference>
<dbReference type="IntAct" id="Q9JIL2">
    <property type="interactions" value="1"/>
</dbReference>
<dbReference type="MINT" id="Q9JIL2"/>
<dbReference type="STRING" id="10090.ENSMUSP00000096847"/>
<dbReference type="GlyCosmos" id="Q9JIL2">
    <property type="glycosylation" value="1 site, No reported glycans"/>
</dbReference>
<dbReference type="GlyGen" id="Q9JIL2">
    <property type="glycosylation" value="1 site"/>
</dbReference>
<dbReference type="PhosphoSitePlus" id="Q9JIL2"/>
<dbReference type="PaxDb" id="10090-ENSMUSP00000096847"/>
<dbReference type="ProteomicsDB" id="265375"/>
<dbReference type="Antibodypedia" id="23245">
    <property type="antibodies" value="352 antibodies from 31 providers"/>
</dbReference>
<dbReference type="DNASU" id="56838"/>
<dbReference type="Ensembl" id="ENSMUST00000099241.4">
    <property type="protein sequence ID" value="ENSMUSP00000096847.3"/>
    <property type="gene ID" value="ENSMUSG00000074715.4"/>
</dbReference>
<dbReference type="GeneID" id="56838"/>
<dbReference type="KEGG" id="mmu:56838"/>
<dbReference type="UCSC" id="uc007sal.1">
    <property type="organism name" value="mouse"/>
</dbReference>
<dbReference type="AGR" id="MGI:1861731"/>
<dbReference type="CTD" id="56477"/>
<dbReference type="MGI" id="MGI:1861731">
    <property type="gene designation" value="Ccl28"/>
</dbReference>
<dbReference type="VEuPathDB" id="HostDB:ENSMUSG00000074715"/>
<dbReference type="eggNOG" id="ENOG502SVUE">
    <property type="taxonomic scope" value="Eukaryota"/>
</dbReference>
<dbReference type="GeneTree" id="ENSGT00530000063923"/>
<dbReference type="HOGENOM" id="CLU_2003113_0_0_1"/>
<dbReference type="InParanoid" id="Q9JIL2"/>
<dbReference type="OMA" id="ICVSPHS"/>
<dbReference type="OrthoDB" id="8905061at2759"/>
<dbReference type="PhylomeDB" id="Q9JIL2"/>
<dbReference type="TreeFam" id="TF337014"/>
<dbReference type="Reactome" id="R-MMU-380108">
    <property type="pathway name" value="Chemokine receptors bind chemokines"/>
</dbReference>
<dbReference type="Reactome" id="R-MMU-418594">
    <property type="pathway name" value="G alpha (i) signalling events"/>
</dbReference>
<dbReference type="BioGRID-ORCS" id="56838">
    <property type="hits" value="3 hits in 76 CRISPR screens"/>
</dbReference>
<dbReference type="ChiTaRS" id="Ccl28">
    <property type="organism name" value="mouse"/>
</dbReference>
<dbReference type="PRO" id="PR:Q9JIL2"/>
<dbReference type="Proteomes" id="UP000000589">
    <property type="component" value="Chromosome 13"/>
</dbReference>
<dbReference type="RNAct" id="Q9JIL2">
    <property type="molecule type" value="protein"/>
</dbReference>
<dbReference type="Bgee" id="ENSMUSG00000074715">
    <property type="expression patterns" value="Expressed in lacrimal gland and 102 other cell types or tissues"/>
</dbReference>
<dbReference type="GO" id="GO:0005615">
    <property type="term" value="C:extracellular space"/>
    <property type="evidence" value="ECO:0007669"/>
    <property type="project" value="UniProtKB-KW"/>
</dbReference>
<dbReference type="GO" id="GO:0008009">
    <property type="term" value="F:chemokine activity"/>
    <property type="evidence" value="ECO:0000250"/>
    <property type="project" value="MGI"/>
</dbReference>
<dbReference type="GO" id="GO:0006955">
    <property type="term" value="P:immune response"/>
    <property type="evidence" value="ECO:0007669"/>
    <property type="project" value="InterPro"/>
</dbReference>
<dbReference type="GO" id="GO:1903237">
    <property type="term" value="P:negative regulation of leukocyte tethering or rolling"/>
    <property type="evidence" value="ECO:0007669"/>
    <property type="project" value="Ensembl"/>
</dbReference>
<dbReference type="GO" id="GO:0001954">
    <property type="term" value="P:positive regulation of cell-matrix adhesion"/>
    <property type="evidence" value="ECO:0007669"/>
    <property type="project" value="Ensembl"/>
</dbReference>
<dbReference type="GO" id="GO:0007204">
    <property type="term" value="P:positive regulation of cytosolic calcium ion concentration"/>
    <property type="evidence" value="ECO:0000314"/>
    <property type="project" value="MGI"/>
</dbReference>
<dbReference type="FunFam" id="2.40.50.40:FF:000019">
    <property type="entry name" value="C-C motif chemokine 27"/>
    <property type="match status" value="1"/>
</dbReference>
<dbReference type="Gene3D" id="2.40.50.40">
    <property type="match status" value="1"/>
</dbReference>
<dbReference type="InterPro" id="IPR001811">
    <property type="entry name" value="Chemokine_IL8-like_dom"/>
</dbReference>
<dbReference type="InterPro" id="IPR036048">
    <property type="entry name" value="Interleukin_8-like_sf"/>
</dbReference>
<dbReference type="Pfam" id="PF00048">
    <property type="entry name" value="IL8"/>
    <property type="match status" value="1"/>
</dbReference>
<dbReference type="SUPFAM" id="SSF54117">
    <property type="entry name" value="Interleukin 8-like chemokines"/>
    <property type="match status" value="1"/>
</dbReference>
<name>CCL28_MOUSE</name>
<organism>
    <name type="scientific">Mus musculus</name>
    <name type="common">Mouse</name>
    <dbReference type="NCBI Taxonomy" id="10090"/>
    <lineage>
        <taxon>Eukaryota</taxon>
        <taxon>Metazoa</taxon>
        <taxon>Chordata</taxon>
        <taxon>Craniata</taxon>
        <taxon>Vertebrata</taxon>
        <taxon>Euteleostomi</taxon>
        <taxon>Mammalia</taxon>
        <taxon>Eutheria</taxon>
        <taxon>Euarchontoglires</taxon>
        <taxon>Glires</taxon>
        <taxon>Rodentia</taxon>
        <taxon>Myomorpha</taxon>
        <taxon>Muroidea</taxon>
        <taxon>Muridae</taxon>
        <taxon>Murinae</taxon>
        <taxon>Mus</taxon>
        <taxon>Mus</taxon>
    </lineage>
</organism>
<protein>
    <recommendedName>
        <fullName>C-C motif chemokine 28</fullName>
    </recommendedName>
    <alternativeName>
        <fullName>Small-inducible cytokine A28</fullName>
    </alternativeName>
</protein>
<reference key="1">
    <citation type="journal article" date="2000" name="J. Biol. Chem.">
        <title>Identification of a novel chemokine (CCL28), which binds CCR10 (GPR2).</title>
        <authorList>
            <person name="Wang W."/>
            <person name="Soto H."/>
            <person name="Oldham E.R."/>
            <person name="Buchanan M.E."/>
            <person name="Homey B."/>
            <person name="Catron D."/>
            <person name="Jenkins N."/>
            <person name="Copeland N.G."/>
            <person name="Gilbert D.J."/>
            <person name="Nguyen N."/>
            <person name="Abrams J."/>
            <person name="Kershenovich D."/>
            <person name="Smith K."/>
            <person name="McClanahan T."/>
            <person name="Vicari A.P."/>
            <person name="Zlotnik A."/>
        </authorList>
    </citation>
    <scope>NUCLEOTIDE SEQUENCE [MRNA]</scope>
    <scope>RECEPTOR INTERACTION</scope>
    <source>
        <tissue>Kidney</tissue>
    </source>
</reference>
<reference key="2">
    <citation type="journal article" date="2004" name="Genome Res.">
        <title>The status, quality, and expansion of the NIH full-length cDNA project: the Mammalian Gene Collection (MGC).</title>
        <authorList>
            <consortium name="The MGC Project Team"/>
        </authorList>
    </citation>
    <scope>NUCLEOTIDE SEQUENCE [LARGE SCALE MRNA]</scope>
    <source>
        <strain>FVB/N</strain>
        <tissue>Kidney</tissue>
    </source>
</reference>
<gene>
    <name type="primary">Ccl28</name>
    <name type="synonym">Scya28</name>
</gene>
<accession>Q9JIL2</accession>
<proteinExistence type="evidence at protein level"/>
<evidence type="ECO:0000250" key="1"/>
<evidence type="ECO:0000255" key="2"/>
<evidence type="ECO:0000256" key="3">
    <source>
        <dbReference type="SAM" id="MobiDB-lite"/>
    </source>
</evidence>
<evidence type="ECO:0000305" key="4"/>
<comment type="function">
    <text evidence="1">Chemotactic for resting CD4, CD8 T-cells and eosinophils (By similarity). Binds to CCR10 and induces calcium mobilization in a dose-dependent manner.</text>
</comment>
<comment type="subcellular location">
    <subcellularLocation>
        <location evidence="1">Secreted</location>
    </subcellularLocation>
</comment>
<comment type="tissue specificity">
    <text>Mainly expressed in testis, epithelial cells of normal colon, kidney, Peyer patches, lymph nodes. Also found in lower levels in brain, spleen and lung.</text>
</comment>
<comment type="similarity">
    <text evidence="4">Belongs to the intercrine beta (chemokine CC) family.</text>
</comment>
<feature type="signal peptide" evidence="2">
    <location>
        <begin position="1"/>
        <end position="16"/>
    </location>
</feature>
<feature type="chain" id="PRO_0000005243" description="C-C motif chemokine 28">
    <location>
        <begin position="17"/>
        <end position="130"/>
    </location>
</feature>
<feature type="region of interest" description="Disordered" evidence="3">
    <location>
        <begin position="92"/>
        <end position="130"/>
    </location>
</feature>
<feature type="compositionally biased region" description="Basic residues" evidence="3">
    <location>
        <begin position="104"/>
        <end position="124"/>
    </location>
</feature>
<feature type="glycosylation site" description="N-linked (GlcNAc...) asparagine" evidence="2">
    <location>
        <position position="78"/>
    </location>
</feature>
<feature type="disulfide bond" evidence="1">
    <location>
        <begin position="30"/>
        <end position="58"/>
    </location>
</feature>
<feature type="disulfide bond" evidence="1">
    <location>
        <begin position="31"/>
        <end position="73"/>
    </location>
</feature>
<sequence>MQQAGLTLMAVAVCVAFQTSEAILPMASSCCTEVSHHVSGRLLERVSSCSIQRADGDCDLAAVILHVKRRRICISPHNRTLKQWMRASEVKKNGRENVCSGKKQPSRKDRKGHTTRKHRTRGTHRHEASR</sequence>
<keyword id="KW-0145">Chemotaxis</keyword>
<keyword id="KW-0202">Cytokine</keyword>
<keyword id="KW-1015">Disulfide bond</keyword>
<keyword id="KW-0325">Glycoprotein</keyword>
<keyword id="KW-1185">Reference proteome</keyword>
<keyword id="KW-0964">Secreted</keyword>
<keyword id="KW-0732">Signal</keyword>